<sequence length="355" mass="37336">MSERATYAARRVLPDAPLLAAAEGRAPGRRPVWFMRQAGRSLPEYREIRSGIGMLESCFDPALVCEITMQPVRRHGVDAAILFSDIVVPLKAAGIDLDIVAGTGPVVANPVRSIADVAALPRLVPEEVGAVAQAVQLLTAELGSTPLIGFAGAPFTLASYLVEGGPSRNHERTKALMHSDPKTWHALLGTLADTTITFLQAQLRAGVDAIQLFDSWAGALSLAEYREFVLPHSERVFAEVESAKVPRIHFGVGTGELLGAMGEAGADVVGVDWRIPLDVAARRVGPGKALQGNLDPAVLFAGSAAVEKQVRRITAEADAALAAGATGHIFNLGHGVLPDTDPGALTALVELVHSL</sequence>
<evidence type="ECO:0000255" key="1">
    <source>
        <dbReference type="HAMAP-Rule" id="MF_00218"/>
    </source>
</evidence>
<accession>C1B4A1</accession>
<protein>
    <recommendedName>
        <fullName evidence="1">Uroporphyrinogen decarboxylase</fullName>
        <shortName evidence="1">UPD</shortName>
        <shortName evidence="1">URO-D</shortName>
        <ecNumber evidence="1">4.1.1.37</ecNumber>
    </recommendedName>
</protein>
<name>DCUP_RHOOB</name>
<dbReference type="EC" id="4.1.1.37" evidence="1"/>
<dbReference type="EMBL" id="AP011115">
    <property type="protein sequence ID" value="BAH55090.1"/>
    <property type="molecule type" value="Genomic_DNA"/>
</dbReference>
<dbReference type="RefSeq" id="WP_015890520.1">
    <property type="nucleotide sequence ID" value="NC_012522.1"/>
</dbReference>
<dbReference type="SMR" id="C1B4A1"/>
<dbReference type="STRING" id="632772.ROP_68430"/>
<dbReference type="KEGG" id="rop:ROP_68430"/>
<dbReference type="PATRIC" id="fig|632772.20.peg.7132"/>
<dbReference type="HOGENOM" id="CLU_040933_0_1_11"/>
<dbReference type="UniPathway" id="UPA00251">
    <property type="reaction ID" value="UER00321"/>
</dbReference>
<dbReference type="Proteomes" id="UP000002212">
    <property type="component" value="Chromosome"/>
</dbReference>
<dbReference type="GO" id="GO:0005829">
    <property type="term" value="C:cytosol"/>
    <property type="evidence" value="ECO:0007669"/>
    <property type="project" value="TreeGrafter"/>
</dbReference>
<dbReference type="GO" id="GO:0004853">
    <property type="term" value="F:uroporphyrinogen decarboxylase activity"/>
    <property type="evidence" value="ECO:0007669"/>
    <property type="project" value="UniProtKB-UniRule"/>
</dbReference>
<dbReference type="GO" id="GO:0006782">
    <property type="term" value="P:protoporphyrinogen IX biosynthetic process"/>
    <property type="evidence" value="ECO:0007669"/>
    <property type="project" value="UniProtKB-UniRule"/>
</dbReference>
<dbReference type="CDD" id="cd00717">
    <property type="entry name" value="URO-D"/>
    <property type="match status" value="1"/>
</dbReference>
<dbReference type="FunFam" id="3.20.20.210:FF:000008">
    <property type="entry name" value="Uroporphyrinogen decarboxylase"/>
    <property type="match status" value="1"/>
</dbReference>
<dbReference type="Gene3D" id="3.20.20.210">
    <property type="match status" value="1"/>
</dbReference>
<dbReference type="HAMAP" id="MF_00218">
    <property type="entry name" value="URO_D"/>
    <property type="match status" value="1"/>
</dbReference>
<dbReference type="InterPro" id="IPR038071">
    <property type="entry name" value="UROD/MetE-like_sf"/>
</dbReference>
<dbReference type="InterPro" id="IPR006361">
    <property type="entry name" value="Uroporphyrinogen_deCO2ase_HemE"/>
</dbReference>
<dbReference type="InterPro" id="IPR000257">
    <property type="entry name" value="Uroporphyrinogen_deCOase"/>
</dbReference>
<dbReference type="NCBIfam" id="TIGR01464">
    <property type="entry name" value="hemE"/>
    <property type="match status" value="1"/>
</dbReference>
<dbReference type="PANTHER" id="PTHR21091">
    <property type="entry name" value="METHYLTETRAHYDROFOLATE:HOMOCYSTEINE METHYLTRANSFERASE RELATED"/>
    <property type="match status" value="1"/>
</dbReference>
<dbReference type="PANTHER" id="PTHR21091:SF169">
    <property type="entry name" value="UROPORPHYRINOGEN DECARBOXYLASE"/>
    <property type="match status" value="1"/>
</dbReference>
<dbReference type="Pfam" id="PF01208">
    <property type="entry name" value="URO-D"/>
    <property type="match status" value="1"/>
</dbReference>
<dbReference type="SUPFAM" id="SSF51726">
    <property type="entry name" value="UROD/MetE-like"/>
    <property type="match status" value="1"/>
</dbReference>
<dbReference type="PROSITE" id="PS00906">
    <property type="entry name" value="UROD_1"/>
    <property type="match status" value="1"/>
</dbReference>
<dbReference type="PROSITE" id="PS00907">
    <property type="entry name" value="UROD_2"/>
    <property type="match status" value="1"/>
</dbReference>
<feature type="chain" id="PRO_1000197536" description="Uroporphyrinogen decarboxylase">
    <location>
        <begin position="1"/>
        <end position="355"/>
    </location>
</feature>
<feature type="binding site" evidence="1">
    <location>
        <begin position="36"/>
        <end position="40"/>
    </location>
    <ligand>
        <name>substrate</name>
    </ligand>
</feature>
<feature type="binding site" evidence="1">
    <location>
        <position position="85"/>
    </location>
    <ligand>
        <name>substrate</name>
    </ligand>
</feature>
<feature type="binding site" evidence="1">
    <location>
        <position position="160"/>
    </location>
    <ligand>
        <name>substrate</name>
    </ligand>
</feature>
<feature type="binding site" evidence="1">
    <location>
        <position position="215"/>
    </location>
    <ligand>
        <name>substrate</name>
    </ligand>
</feature>
<feature type="binding site" evidence="1">
    <location>
        <position position="334"/>
    </location>
    <ligand>
        <name>substrate</name>
    </ligand>
</feature>
<feature type="site" description="Transition state stabilizer" evidence="1">
    <location>
        <position position="85"/>
    </location>
</feature>
<comment type="function">
    <text evidence="1">Catalyzes the decarboxylation of four acetate groups of uroporphyrinogen-III to yield coproporphyrinogen-III.</text>
</comment>
<comment type="catalytic activity">
    <reaction evidence="1">
        <text>uroporphyrinogen III + 4 H(+) = coproporphyrinogen III + 4 CO2</text>
        <dbReference type="Rhea" id="RHEA:19865"/>
        <dbReference type="ChEBI" id="CHEBI:15378"/>
        <dbReference type="ChEBI" id="CHEBI:16526"/>
        <dbReference type="ChEBI" id="CHEBI:57308"/>
        <dbReference type="ChEBI" id="CHEBI:57309"/>
        <dbReference type="EC" id="4.1.1.37"/>
    </reaction>
</comment>
<comment type="pathway">
    <text evidence="1">Porphyrin-containing compound metabolism; protoporphyrin-IX biosynthesis; coproporphyrinogen-III from 5-aminolevulinate: step 4/4.</text>
</comment>
<comment type="subunit">
    <text evidence="1">Homodimer.</text>
</comment>
<comment type="subcellular location">
    <subcellularLocation>
        <location evidence="1">Cytoplasm</location>
    </subcellularLocation>
</comment>
<comment type="similarity">
    <text evidence="1">Belongs to the uroporphyrinogen decarboxylase family.</text>
</comment>
<gene>
    <name evidence="1" type="primary">hemE</name>
    <name type="ordered locus">ROP_68430</name>
</gene>
<organism>
    <name type="scientific">Rhodococcus opacus (strain B4)</name>
    <dbReference type="NCBI Taxonomy" id="632772"/>
    <lineage>
        <taxon>Bacteria</taxon>
        <taxon>Bacillati</taxon>
        <taxon>Actinomycetota</taxon>
        <taxon>Actinomycetes</taxon>
        <taxon>Mycobacteriales</taxon>
        <taxon>Nocardiaceae</taxon>
        <taxon>Rhodococcus</taxon>
    </lineage>
</organism>
<proteinExistence type="inferred from homology"/>
<keyword id="KW-0963">Cytoplasm</keyword>
<keyword id="KW-0210">Decarboxylase</keyword>
<keyword id="KW-0456">Lyase</keyword>
<keyword id="KW-0627">Porphyrin biosynthesis</keyword>
<reference key="1">
    <citation type="submission" date="2009-03" db="EMBL/GenBank/DDBJ databases">
        <title>Comparison of the complete genome sequences of Rhodococcus erythropolis PR4 and Rhodococcus opacus B4.</title>
        <authorList>
            <person name="Takarada H."/>
            <person name="Sekine M."/>
            <person name="Hosoyama A."/>
            <person name="Yamada R."/>
            <person name="Fujisawa T."/>
            <person name="Omata S."/>
            <person name="Shimizu A."/>
            <person name="Tsukatani N."/>
            <person name="Tanikawa S."/>
            <person name="Fujita N."/>
            <person name="Harayama S."/>
        </authorList>
    </citation>
    <scope>NUCLEOTIDE SEQUENCE [LARGE SCALE GENOMIC DNA]</scope>
    <source>
        <strain>B4</strain>
    </source>
</reference>